<protein>
    <recommendedName>
        <fullName evidence="1">Pyrrolidone-carboxylate peptidase 2</fullName>
        <ecNumber evidence="1">3.4.19.3</ecNumber>
    </recommendedName>
    <alternativeName>
        <fullName evidence="1">5-oxoprolyl-peptidase 2</fullName>
    </alternativeName>
    <alternativeName>
        <fullName evidence="1">Pyroglutamyl-peptidase I 2</fullName>
        <shortName evidence="1">PGP-I 2</shortName>
        <shortName evidence="1">Pyrase 2</shortName>
    </alternativeName>
</protein>
<organism>
    <name type="scientific">Streptococcus pneumoniae serotype 4 (strain ATCC BAA-334 / TIGR4)</name>
    <dbReference type="NCBI Taxonomy" id="170187"/>
    <lineage>
        <taxon>Bacteria</taxon>
        <taxon>Bacillati</taxon>
        <taxon>Bacillota</taxon>
        <taxon>Bacilli</taxon>
        <taxon>Lactobacillales</taxon>
        <taxon>Streptococcaceae</taxon>
        <taxon>Streptococcus</taxon>
    </lineage>
</organism>
<dbReference type="EC" id="3.4.19.3" evidence="1"/>
<dbReference type="EMBL" id="AE005672">
    <property type="protein sequence ID" value="AAK76124.1"/>
    <property type="molecule type" value="Genomic_DNA"/>
</dbReference>
<dbReference type="PIR" id="C95241">
    <property type="entry name" value="C95241"/>
</dbReference>
<dbReference type="SMR" id="Q97NG9"/>
<dbReference type="MEROPS" id="C15.001"/>
<dbReference type="PaxDb" id="170187-SP_2060"/>
<dbReference type="EnsemblBacteria" id="AAK76124">
    <property type="protein sequence ID" value="AAK76124"/>
    <property type="gene ID" value="SP_2060"/>
</dbReference>
<dbReference type="KEGG" id="spn:SP_2060"/>
<dbReference type="eggNOG" id="COG2039">
    <property type="taxonomic scope" value="Bacteria"/>
</dbReference>
<dbReference type="PhylomeDB" id="Q97NG9"/>
<dbReference type="BioCyc" id="SPNE170187:G1FZB-2129-MONOMER"/>
<dbReference type="Proteomes" id="UP000000585">
    <property type="component" value="Chromosome"/>
</dbReference>
<dbReference type="GO" id="GO:0005829">
    <property type="term" value="C:cytosol"/>
    <property type="evidence" value="ECO:0007669"/>
    <property type="project" value="InterPro"/>
</dbReference>
<dbReference type="GO" id="GO:0016920">
    <property type="term" value="F:pyroglutamyl-peptidase activity"/>
    <property type="evidence" value="ECO:0007669"/>
    <property type="project" value="UniProtKB-UniRule"/>
</dbReference>
<dbReference type="GO" id="GO:0006508">
    <property type="term" value="P:proteolysis"/>
    <property type="evidence" value="ECO:0007669"/>
    <property type="project" value="UniProtKB-KW"/>
</dbReference>
<dbReference type="CDD" id="cd00501">
    <property type="entry name" value="Peptidase_C15"/>
    <property type="match status" value="1"/>
</dbReference>
<dbReference type="FunFam" id="3.40.630.20:FF:000001">
    <property type="entry name" value="Pyrrolidone-carboxylate peptidase"/>
    <property type="match status" value="1"/>
</dbReference>
<dbReference type="Gene3D" id="3.40.630.20">
    <property type="entry name" value="Peptidase C15, pyroglutamyl peptidase I-like"/>
    <property type="match status" value="1"/>
</dbReference>
<dbReference type="HAMAP" id="MF_00417">
    <property type="entry name" value="Pyrrolid_peptidase"/>
    <property type="match status" value="1"/>
</dbReference>
<dbReference type="InterPro" id="IPR000816">
    <property type="entry name" value="Peptidase_C15"/>
</dbReference>
<dbReference type="InterPro" id="IPR016125">
    <property type="entry name" value="Peptidase_C15-like"/>
</dbReference>
<dbReference type="InterPro" id="IPR036440">
    <property type="entry name" value="Peptidase_C15-like_sf"/>
</dbReference>
<dbReference type="InterPro" id="IPR029762">
    <property type="entry name" value="PGP-I_bact-type"/>
</dbReference>
<dbReference type="InterPro" id="IPR033694">
    <property type="entry name" value="PGPEP1_Cys_AS"/>
</dbReference>
<dbReference type="NCBIfam" id="NF009676">
    <property type="entry name" value="PRK13197.1"/>
    <property type="match status" value="1"/>
</dbReference>
<dbReference type="NCBIfam" id="TIGR00504">
    <property type="entry name" value="pyro_pdase"/>
    <property type="match status" value="1"/>
</dbReference>
<dbReference type="PANTHER" id="PTHR23402">
    <property type="entry name" value="PROTEASE FAMILY C15 PYROGLUTAMYL-PEPTIDASE I-RELATED"/>
    <property type="match status" value="1"/>
</dbReference>
<dbReference type="PANTHER" id="PTHR23402:SF1">
    <property type="entry name" value="PYROGLUTAMYL-PEPTIDASE I"/>
    <property type="match status" value="1"/>
</dbReference>
<dbReference type="Pfam" id="PF01470">
    <property type="entry name" value="Peptidase_C15"/>
    <property type="match status" value="1"/>
</dbReference>
<dbReference type="PIRSF" id="PIRSF015592">
    <property type="entry name" value="Prld-crbxl_pptds"/>
    <property type="match status" value="1"/>
</dbReference>
<dbReference type="PRINTS" id="PR00706">
    <property type="entry name" value="PYROGLUPTASE"/>
</dbReference>
<dbReference type="SUPFAM" id="SSF53182">
    <property type="entry name" value="Pyrrolidone carboxyl peptidase (pyroglutamate aminopeptidase)"/>
    <property type="match status" value="1"/>
</dbReference>
<dbReference type="PROSITE" id="PS01334">
    <property type="entry name" value="PYRASE_CYS"/>
    <property type="match status" value="1"/>
</dbReference>
<gene>
    <name evidence="1" type="primary">pcp2</name>
    <name type="ordered locus">SP_2060</name>
</gene>
<keyword id="KW-0963">Cytoplasm</keyword>
<keyword id="KW-0378">Hydrolase</keyword>
<keyword id="KW-0645">Protease</keyword>
<keyword id="KW-1185">Reference proteome</keyword>
<keyword id="KW-0788">Thiol protease</keyword>
<reference key="1">
    <citation type="journal article" date="2001" name="Science">
        <title>Complete genome sequence of a virulent isolate of Streptococcus pneumoniae.</title>
        <authorList>
            <person name="Tettelin H."/>
            <person name="Nelson K.E."/>
            <person name="Paulsen I.T."/>
            <person name="Eisen J.A."/>
            <person name="Read T.D."/>
            <person name="Peterson S.N."/>
            <person name="Heidelberg J.F."/>
            <person name="DeBoy R.T."/>
            <person name="Haft D.H."/>
            <person name="Dodson R.J."/>
            <person name="Durkin A.S."/>
            <person name="Gwinn M.L."/>
            <person name="Kolonay J.F."/>
            <person name="Nelson W.C."/>
            <person name="Peterson J.D."/>
            <person name="Umayam L.A."/>
            <person name="White O."/>
            <person name="Salzberg S.L."/>
            <person name="Lewis M.R."/>
            <person name="Radune D."/>
            <person name="Holtzapple E.K."/>
            <person name="Khouri H.M."/>
            <person name="Wolf A.M."/>
            <person name="Utterback T.R."/>
            <person name="Hansen C.L."/>
            <person name="McDonald L.A."/>
            <person name="Feldblyum T.V."/>
            <person name="Angiuoli S.V."/>
            <person name="Dickinson T."/>
            <person name="Hickey E.K."/>
            <person name="Holt I.E."/>
            <person name="Loftus B.J."/>
            <person name="Yang F."/>
            <person name="Smith H.O."/>
            <person name="Venter J.C."/>
            <person name="Dougherty B.A."/>
            <person name="Morrison D.A."/>
            <person name="Hollingshead S.K."/>
            <person name="Fraser C.M."/>
        </authorList>
    </citation>
    <scope>NUCLEOTIDE SEQUENCE [LARGE SCALE GENOMIC DNA]</scope>
    <source>
        <strain>ATCC BAA-334 / TIGR4</strain>
    </source>
</reference>
<feature type="chain" id="PRO_0000184741" description="Pyrrolidone-carboxylate peptidase 2">
    <location>
        <begin position="1"/>
        <end position="214"/>
    </location>
</feature>
<feature type="active site" evidence="1">
    <location>
        <position position="78"/>
    </location>
</feature>
<feature type="active site" evidence="1">
    <location>
        <position position="141"/>
    </location>
</feature>
<feature type="active site" evidence="1">
    <location>
        <position position="165"/>
    </location>
</feature>
<name>PCP2_STRPN</name>
<accession>Q97NG9</accession>
<evidence type="ECO:0000255" key="1">
    <source>
        <dbReference type="HAMAP-Rule" id="MF_00417"/>
    </source>
</evidence>
<comment type="function">
    <text evidence="1">Removes 5-oxoproline from various penultimate amino acid residues except L-proline.</text>
</comment>
<comment type="catalytic activity">
    <reaction evidence="1">
        <text>Release of an N-terminal pyroglutamyl group from a polypeptide, the second amino acid generally not being Pro.</text>
        <dbReference type="EC" id="3.4.19.3"/>
    </reaction>
</comment>
<comment type="subunit">
    <text evidence="1">Homotetramer.</text>
</comment>
<comment type="subcellular location">
    <subcellularLocation>
        <location evidence="1">Cytoplasm</location>
    </subcellularLocation>
</comment>
<comment type="similarity">
    <text evidence="1">Belongs to the peptidase C15 family.</text>
</comment>
<sequence length="214" mass="23406">MKVLVTGFEPFGGEKGNPALEAIKGLPAEIHGAEVRWLEVPTVFHKSAQVLEEEMNRYQPDFVLCIGQAGGRTSLTPERVTINQDDACISDNEDNQPIDRPIRPDGASAYFSSLPIKAMVQAIKKEGLPASVSNTAGTFVCSHLMYQALYLVEKKSPYVKAGFMHIPYMMEQVVNRPTTPAMSLVDIRRGIEAAIGAIIEHGDQELKLVGGETH</sequence>
<proteinExistence type="inferred from homology"/>